<name>TAT_SIVSP</name>
<sequence length="128" mass="14582">METPLKEQESSLESSREHSSSISEVDADTPESASLEEEILSQLYRPLEACYNKCYCKRCCYHCQHCFLKKGLGICYEQQRRRTPKKTKANTSSASDKSLSRRARNCQPKKEKKETVEAEVATDLGLGR</sequence>
<organism>
    <name type="scientific">Simian immunodeficiency virus (isolate PBj14/BCL-3)</name>
    <name type="common">SIV-sm</name>
    <name type="synonym">Simian immunodeficiency virus sooty mangabey monkey</name>
    <dbReference type="NCBI Taxonomy" id="11738"/>
    <lineage>
        <taxon>Viruses</taxon>
        <taxon>Riboviria</taxon>
        <taxon>Pararnavirae</taxon>
        <taxon>Artverviricota</taxon>
        <taxon>Revtraviricetes</taxon>
        <taxon>Ortervirales</taxon>
        <taxon>Retroviridae</taxon>
        <taxon>Orthoretrovirinae</taxon>
        <taxon>Lentivirus</taxon>
        <taxon>Simian immunodeficiency virus</taxon>
    </lineage>
</organism>
<comment type="function">
    <text evidence="2">Transcriptional activator that increases RNA Pol II processivity, thereby increasing the level of full-length viral transcripts. Recognizes a hairpin structure at the 5'-LTR of the nascent viral mRNAs referred to as the transactivation responsive RNA element (TAR) and recruits the cyclin T1-CDK9 complex (P-TEFb complex) that will in turn hyperphosphorylate the RNA polymerase II to allow efficient elongation. The CDK9 component of P-TEFb and other Tat-activated kinases hyperphosphorylate the C-terminus of RNA Pol II that becomes stabilized and much more processive.</text>
</comment>
<comment type="function">
    <text evidence="1">Extracellular circulating Tat can be endocytosed by surrounding uninfected cells via the binding to several surface receptors. Endosomal low pH allows Tat to cross the endosome membrane to enter the cytosol and eventually further translocate into the nucleus, thereby inducing severe cell dysfunctions ranging from cell activation to cell death. Through (By similarity).</text>
</comment>
<comment type="subunit">
    <text evidence="1">Interacts with host CCNT1. Associates with the P-TEFb complex composed at least of Tat, P-TEFb (CDK9 and CCNT1), TAR RNA, RNA Pol II. Interacts with CCNT2; the resulting complex is unable to bind to TAR RNA (By similarity).</text>
</comment>
<comment type="subcellular location">
    <subcellularLocation>
        <location evidence="1">Host nucleus</location>
        <location evidence="1">Host nucleolus</location>
    </subcellularLocation>
</comment>
<comment type="similarity">
    <text evidence="5">Belongs to the lentiviruses Tat family.</text>
</comment>
<evidence type="ECO:0000250" key="1"/>
<evidence type="ECO:0000250" key="2">
    <source>
        <dbReference type="UniProtKB" id="P04608"/>
    </source>
</evidence>
<evidence type="ECO:0000255" key="3"/>
<evidence type="ECO:0000256" key="4">
    <source>
        <dbReference type="SAM" id="MobiDB-lite"/>
    </source>
</evidence>
<evidence type="ECO:0000305" key="5"/>
<proteinExistence type="inferred from homology"/>
<reference key="1">
    <citation type="journal article" date="1990" name="Nature">
        <title>Sequence analysis and acute pathogenicity of molecularly cloned SIVSMM-PBj14.</title>
        <authorList>
            <person name="Dewhurst S."/>
            <person name="Embretson J.E."/>
            <person name="Anderson D.C."/>
            <person name="Mullins J.I."/>
            <person name="Fultz P.N."/>
        </authorList>
    </citation>
    <scope>NUCLEOTIDE SEQUENCE [GENOMIC RNA]</scope>
</reference>
<reference key="2">
    <citation type="journal article" date="1992" name="AIDS Res. Hum. Retroviruses">
        <title>Molecular clones from a non-acutely pathogenic derivative of SIVsmmPBj14: characterization and comparison to acutely pathogenic clones.</title>
        <authorList>
            <person name="Dewhurst S."/>
            <person name="Embretson J.E."/>
            <person name="Fultz P.N."/>
            <person name="Mullins J.I."/>
        </authorList>
    </citation>
    <scope>NUCLEOTIDE SEQUENCE [GENOMIC RNA]</scope>
</reference>
<accession>P19507</accession>
<gene>
    <name type="primary">tat</name>
</gene>
<organismHost>
    <name type="scientific">Cercopithecidae</name>
    <name type="common">Old World monkeys</name>
    <dbReference type="NCBI Taxonomy" id="9527"/>
</organismHost>
<dbReference type="EMBL" id="L03295">
    <property type="protein sequence ID" value="AAB59768.1"/>
    <property type="molecule type" value="Genomic_RNA"/>
</dbReference>
<dbReference type="EMBL" id="L03298">
    <property type="protein sequence ID" value="AAA47775.1"/>
    <property type="molecule type" value="Genomic_RNA"/>
</dbReference>
<dbReference type="EMBL" id="M31325">
    <property type="protein sequence ID" value="AAA47750.1"/>
    <property type="molecule type" value="Genomic_RNA"/>
</dbReference>
<dbReference type="Proteomes" id="UP000007221">
    <property type="component" value="Segment"/>
</dbReference>
<dbReference type="GO" id="GO:0044196">
    <property type="term" value="C:host cell nucleolus"/>
    <property type="evidence" value="ECO:0007669"/>
    <property type="project" value="UniProtKB-SubCell"/>
</dbReference>
<dbReference type="GO" id="GO:0003723">
    <property type="term" value="F:RNA binding"/>
    <property type="evidence" value="ECO:0007669"/>
    <property type="project" value="UniProtKB-KW"/>
</dbReference>
<dbReference type="GO" id="GO:0001070">
    <property type="term" value="F:RNA-binding transcription regulator activity"/>
    <property type="evidence" value="ECO:0007669"/>
    <property type="project" value="InterPro"/>
</dbReference>
<dbReference type="GO" id="GO:0050434">
    <property type="term" value="P:positive regulation of viral transcription"/>
    <property type="evidence" value="ECO:0007669"/>
    <property type="project" value="InterPro"/>
</dbReference>
<dbReference type="Gene3D" id="4.10.20.10">
    <property type="entry name" value="Tat domain"/>
    <property type="match status" value="1"/>
</dbReference>
<dbReference type="InterPro" id="IPR001831">
    <property type="entry name" value="IV_Tat"/>
</dbReference>
<dbReference type="InterPro" id="IPR036963">
    <property type="entry name" value="Tat_dom_sf"/>
</dbReference>
<dbReference type="Pfam" id="PF00539">
    <property type="entry name" value="Tat"/>
    <property type="match status" value="1"/>
</dbReference>
<dbReference type="PRINTS" id="PR00055">
    <property type="entry name" value="HIVTATDOMAIN"/>
</dbReference>
<feature type="chain" id="PRO_0000085387" description="Protein Tat">
    <location>
        <begin position="1"/>
        <end position="128"/>
    </location>
</feature>
<feature type="region of interest" description="Disordered" evidence="4">
    <location>
        <begin position="1"/>
        <end position="34"/>
    </location>
</feature>
<feature type="region of interest" description="Cysteine-rich" evidence="1">
    <location>
        <begin position="50"/>
        <end position="66"/>
    </location>
</feature>
<feature type="region of interest" description="Core" evidence="1">
    <location>
        <begin position="67"/>
        <end position="77"/>
    </location>
</feature>
<feature type="region of interest" description="Disordered" evidence="4">
    <location>
        <begin position="79"/>
        <end position="128"/>
    </location>
</feature>
<feature type="short sequence motif" description="Nuclear localization signal, and RNA-binding (TAR)" evidence="3">
    <location>
        <begin position="78"/>
        <end position="82"/>
    </location>
</feature>
<feature type="compositionally biased region" description="Basic and acidic residues" evidence="4">
    <location>
        <begin position="1"/>
        <end position="19"/>
    </location>
</feature>
<feature type="compositionally biased region" description="Acidic residues" evidence="4">
    <location>
        <begin position="25"/>
        <end position="34"/>
    </location>
</feature>
<keyword id="KW-0010">Activator</keyword>
<keyword id="KW-1048">Host nucleus</keyword>
<keyword id="KW-0945">Host-virus interaction</keyword>
<keyword id="KW-0694">RNA-binding</keyword>
<keyword id="KW-0804">Transcription</keyword>
<keyword id="KW-0805">Transcription regulation</keyword>
<protein>
    <recommendedName>
        <fullName>Protein Tat</fullName>
    </recommendedName>
    <alternativeName>
        <fullName>Transactivating regulatory protein</fullName>
    </alternativeName>
</protein>